<comment type="function">
    <text evidence="1">Involved in the regulation of glutamine synthetase GlnA, a key enzyme in the process to assimilate ammonia. When cellular nitrogen levels are high, the C-terminal adenylyl transferase (AT) inactivates GlnA by covalent transfer of an adenylyl group from ATP to specific tyrosine residue of GlnA, thus reducing its activity. Conversely, when nitrogen levels are low, the N-terminal adenylyl removase (AR) activates GlnA by removing the adenylyl group by phosphorolysis, increasing its activity. The regulatory region of GlnE binds the signal transduction protein PII (GlnB) which indicates the nitrogen status of the cell.</text>
</comment>
<comment type="catalytic activity">
    <reaction evidence="1">
        <text>[glutamine synthetase]-O(4)-(5'-adenylyl)-L-tyrosine + phosphate = [glutamine synthetase]-L-tyrosine + ADP</text>
        <dbReference type="Rhea" id="RHEA:43716"/>
        <dbReference type="Rhea" id="RHEA-COMP:10660"/>
        <dbReference type="Rhea" id="RHEA-COMP:10661"/>
        <dbReference type="ChEBI" id="CHEBI:43474"/>
        <dbReference type="ChEBI" id="CHEBI:46858"/>
        <dbReference type="ChEBI" id="CHEBI:83624"/>
        <dbReference type="ChEBI" id="CHEBI:456216"/>
        <dbReference type="EC" id="2.7.7.89"/>
    </reaction>
</comment>
<comment type="catalytic activity">
    <reaction evidence="1">
        <text>[glutamine synthetase]-L-tyrosine + ATP = [glutamine synthetase]-O(4)-(5'-adenylyl)-L-tyrosine + diphosphate</text>
        <dbReference type="Rhea" id="RHEA:18589"/>
        <dbReference type="Rhea" id="RHEA-COMP:10660"/>
        <dbReference type="Rhea" id="RHEA-COMP:10661"/>
        <dbReference type="ChEBI" id="CHEBI:30616"/>
        <dbReference type="ChEBI" id="CHEBI:33019"/>
        <dbReference type="ChEBI" id="CHEBI:46858"/>
        <dbReference type="ChEBI" id="CHEBI:83624"/>
        <dbReference type="EC" id="2.7.7.42"/>
    </reaction>
</comment>
<comment type="cofactor">
    <cofactor evidence="1">
        <name>Mg(2+)</name>
        <dbReference type="ChEBI" id="CHEBI:18420"/>
    </cofactor>
</comment>
<comment type="similarity">
    <text evidence="1">Belongs to the GlnE family.</text>
</comment>
<name>GLNE_BURMA</name>
<organism>
    <name type="scientific">Burkholderia mallei (strain ATCC 23344)</name>
    <dbReference type="NCBI Taxonomy" id="243160"/>
    <lineage>
        <taxon>Bacteria</taxon>
        <taxon>Pseudomonadati</taxon>
        <taxon>Pseudomonadota</taxon>
        <taxon>Betaproteobacteria</taxon>
        <taxon>Burkholderiales</taxon>
        <taxon>Burkholderiaceae</taxon>
        <taxon>Burkholderia</taxon>
        <taxon>pseudomallei group</taxon>
    </lineage>
</organism>
<proteinExistence type="inferred from homology"/>
<accession>Q62HC7</accession>
<feature type="chain" id="PRO_0000209237" description="Bifunctional glutamine synthetase adenylyltransferase/adenylyl-removing enzyme">
    <location>
        <begin position="1"/>
        <end position="925"/>
    </location>
</feature>
<feature type="region of interest" description="Adenylyl removase" evidence="1">
    <location>
        <begin position="1"/>
        <end position="426"/>
    </location>
</feature>
<feature type="region of interest" description="Adenylyl transferase" evidence="1">
    <location>
        <begin position="436"/>
        <end position="925"/>
    </location>
</feature>
<evidence type="ECO:0000255" key="1">
    <source>
        <dbReference type="HAMAP-Rule" id="MF_00802"/>
    </source>
</evidence>
<dbReference type="EC" id="2.7.7.89" evidence="1"/>
<dbReference type="EC" id="2.7.7.42" evidence="1"/>
<dbReference type="EMBL" id="CP000010">
    <property type="protein sequence ID" value="AAU50234.1"/>
    <property type="molecule type" value="Genomic_DNA"/>
</dbReference>
<dbReference type="RefSeq" id="WP_004196324.1">
    <property type="nucleotide sequence ID" value="NC_006348.1"/>
</dbReference>
<dbReference type="RefSeq" id="YP_103893.1">
    <property type="nucleotide sequence ID" value="NC_006348.1"/>
</dbReference>
<dbReference type="SMR" id="Q62HC7"/>
<dbReference type="GeneID" id="92980027"/>
<dbReference type="KEGG" id="bma:BMA2334"/>
<dbReference type="PATRIC" id="fig|243160.12.peg.2403"/>
<dbReference type="eggNOG" id="COG1391">
    <property type="taxonomic scope" value="Bacteria"/>
</dbReference>
<dbReference type="HOGENOM" id="CLU_006233_0_1_4"/>
<dbReference type="Proteomes" id="UP000006693">
    <property type="component" value="Chromosome 1"/>
</dbReference>
<dbReference type="GO" id="GO:0005829">
    <property type="term" value="C:cytosol"/>
    <property type="evidence" value="ECO:0007669"/>
    <property type="project" value="TreeGrafter"/>
</dbReference>
<dbReference type="GO" id="GO:0008882">
    <property type="term" value="F:[glutamate-ammonia-ligase] adenylyltransferase activity"/>
    <property type="evidence" value="ECO:0007669"/>
    <property type="project" value="UniProtKB-UniRule"/>
</dbReference>
<dbReference type="GO" id="GO:0047388">
    <property type="term" value="F:[glutamine synthetase]-adenylyl-L-tyrosine phosphorylase activity"/>
    <property type="evidence" value="ECO:0007669"/>
    <property type="project" value="UniProtKB-EC"/>
</dbReference>
<dbReference type="GO" id="GO:0005524">
    <property type="term" value="F:ATP binding"/>
    <property type="evidence" value="ECO:0007669"/>
    <property type="project" value="UniProtKB-UniRule"/>
</dbReference>
<dbReference type="GO" id="GO:0000287">
    <property type="term" value="F:magnesium ion binding"/>
    <property type="evidence" value="ECO:0007669"/>
    <property type="project" value="UniProtKB-UniRule"/>
</dbReference>
<dbReference type="GO" id="GO:0000820">
    <property type="term" value="P:regulation of glutamine family amino acid metabolic process"/>
    <property type="evidence" value="ECO:0007669"/>
    <property type="project" value="UniProtKB-UniRule"/>
</dbReference>
<dbReference type="CDD" id="cd05401">
    <property type="entry name" value="NT_GlnE_GlnD_like"/>
    <property type="match status" value="2"/>
</dbReference>
<dbReference type="FunFam" id="1.20.120.330:FF:000005">
    <property type="entry name" value="Bifunctional glutamine synthetase adenylyltransferase/adenylyl-removing enzyme"/>
    <property type="match status" value="1"/>
</dbReference>
<dbReference type="Gene3D" id="1.20.120.1510">
    <property type="match status" value="1"/>
</dbReference>
<dbReference type="Gene3D" id="3.30.460.10">
    <property type="entry name" value="Beta Polymerase, domain 2"/>
    <property type="match status" value="2"/>
</dbReference>
<dbReference type="Gene3D" id="1.20.120.330">
    <property type="entry name" value="Nucleotidyltransferases domain 2"/>
    <property type="match status" value="2"/>
</dbReference>
<dbReference type="HAMAP" id="MF_00802">
    <property type="entry name" value="GlnE"/>
    <property type="match status" value="1"/>
</dbReference>
<dbReference type="InterPro" id="IPR023057">
    <property type="entry name" value="GlnE"/>
</dbReference>
<dbReference type="InterPro" id="IPR005190">
    <property type="entry name" value="GlnE_rpt_dom"/>
</dbReference>
<dbReference type="InterPro" id="IPR043519">
    <property type="entry name" value="NT_sf"/>
</dbReference>
<dbReference type="InterPro" id="IPR013546">
    <property type="entry name" value="PII_UdlTrfase/GS_AdlTrfase"/>
</dbReference>
<dbReference type="NCBIfam" id="NF008292">
    <property type="entry name" value="PRK11072.1"/>
    <property type="match status" value="1"/>
</dbReference>
<dbReference type="PANTHER" id="PTHR30621:SF0">
    <property type="entry name" value="BIFUNCTIONAL GLUTAMINE SYNTHETASE ADENYLYLTRANSFERASE_ADENYLYL-REMOVING ENZYME"/>
    <property type="match status" value="1"/>
</dbReference>
<dbReference type="PANTHER" id="PTHR30621">
    <property type="entry name" value="GLUTAMINE SYNTHETASE ADENYLYLTRANSFERASE"/>
    <property type="match status" value="1"/>
</dbReference>
<dbReference type="Pfam" id="PF08335">
    <property type="entry name" value="GlnD_UR_UTase"/>
    <property type="match status" value="2"/>
</dbReference>
<dbReference type="Pfam" id="PF03710">
    <property type="entry name" value="GlnE"/>
    <property type="match status" value="2"/>
</dbReference>
<dbReference type="SUPFAM" id="SSF81301">
    <property type="entry name" value="Nucleotidyltransferase"/>
    <property type="match status" value="2"/>
</dbReference>
<dbReference type="SUPFAM" id="SSF81593">
    <property type="entry name" value="Nucleotidyltransferase substrate binding subunit/domain"/>
    <property type="match status" value="2"/>
</dbReference>
<reference key="1">
    <citation type="journal article" date="2004" name="Proc. Natl. Acad. Sci. U.S.A.">
        <title>Structural flexibility in the Burkholderia mallei genome.</title>
        <authorList>
            <person name="Nierman W.C."/>
            <person name="DeShazer D."/>
            <person name="Kim H.S."/>
            <person name="Tettelin H."/>
            <person name="Nelson K.E."/>
            <person name="Feldblyum T.V."/>
            <person name="Ulrich R.L."/>
            <person name="Ronning C.M."/>
            <person name="Brinkac L.M."/>
            <person name="Daugherty S.C."/>
            <person name="Davidsen T.D."/>
            <person name="DeBoy R.T."/>
            <person name="Dimitrov G."/>
            <person name="Dodson R.J."/>
            <person name="Durkin A.S."/>
            <person name="Gwinn M.L."/>
            <person name="Haft D.H."/>
            <person name="Khouri H.M."/>
            <person name="Kolonay J.F."/>
            <person name="Madupu R."/>
            <person name="Mohammoud Y."/>
            <person name="Nelson W.C."/>
            <person name="Radune D."/>
            <person name="Romero C.M."/>
            <person name="Sarria S."/>
            <person name="Selengut J."/>
            <person name="Shamblin C."/>
            <person name="Sullivan S.A."/>
            <person name="White O."/>
            <person name="Yu Y."/>
            <person name="Zafar N."/>
            <person name="Zhou L."/>
            <person name="Fraser C.M."/>
        </authorList>
    </citation>
    <scope>NUCLEOTIDE SEQUENCE [LARGE SCALE GENOMIC DNA]</scope>
    <source>
        <strain>ATCC 23344</strain>
    </source>
</reference>
<protein>
    <recommendedName>
        <fullName evidence="1">Bifunctional glutamine synthetase adenylyltransferase/adenylyl-removing enzyme</fullName>
    </recommendedName>
    <alternativeName>
        <fullName evidence="1">ATP:glutamine synthetase adenylyltransferase</fullName>
    </alternativeName>
    <alternativeName>
        <fullName evidence="1">ATase</fullName>
    </alternativeName>
    <domain>
        <recommendedName>
            <fullName evidence="1">Glutamine synthetase adenylyl-L-tyrosine phosphorylase</fullName>
            <ecNumber evidence="1">2.7.7.89</ecNumber>
        </recommendedName>
        <alternativeName>
            <fullName evidence="1">Adenylyl removase</fullName>
            <shortName evidence="1">AR</shortName>
            <shortName evidence="1">AT-N</shortName>
        </alternativeName>
    </domain>
    <domain>
        <recommendedName>
            <fullName evidence="1">Glutamine synthetase adenylyl transferase</fullName>
            <ecNumber evidence="1">2.7.7.42</ecNumber>
        </recommendedName>
        <alternativeName>
            <fullName evidence="1">Adenylyl transferase</fullName>
            <shortName evidence="1">AT</shortName>
            <shortName evidence="1">AT-C</shortName>
        </alternativeName>
    </domain>
</protein>
<gene>
    <name evidence="1" type="primary">glnE</name>
    <name type="ordered locus">BMA2334</name>
</gene>
<keyword id="KW-0067">ATP-binding</keyword>
<keyword id="KW-0460">Magnesium</keyword>
<keyword id="KW-0511">Multifunctional enzyme</keyword>
<keyword id="KW-0547">Nucleotide-binding</keyword>
<keyword id="KW-0548">Nucleotidyltransferase</keyword>
<keyword id="KW-1185">Reference proteome</keyword>
<keyword id="KW-0808">Transferase</keyword>
<sequence length="925" mass="102151">MTDASDLLSLSYSHYLARAAAARPALAERIAAWAAAPVTRAALDARLDELLAQGGQPPSEDALKKALRQLRGEAFGAVAERDLAGRADVAEVTGTMTDLAEAAIQRALALLAAELEAQYGEPRGPSGERLALGVVGMGKLGGRELNVSSDIDLIFVYEDDGETAGGARAPISVHEFFTRLGRRLIGVLSEATADGYVFRVDMRLRPNGDSGPLVCSLGMLEEYFYVQGREWERYAWIKGRLVTERASAAARRLAQQLDAIVKPFVYRRYLDFGVIGAIRSLHEQIRQEARRRATMRPDKADDIKLGRGGIREIEFSAQVFQLIRGGQDAGFRVQPTLAVLRHASASGLITEEVRAGLTHAYLFLRTLEHRLQYRNDAQTHAMPVDPAERAALAASLGFADYAALIDRLDQHRAFVEAQFDQVFADKADGGARREDDQAAGCIWSGALADDGADEALVARLAELGFADPAAVLARLQAVWRSSRYAGLPESSRVRFDRVAHRALEAAPGIDAAHRDETVVRCFDLLETVGRRGAYLALLTEYPAALRRVLSVLGATRWGGGYLIRHPQLLDELLDDEAIDSPFDWPAFKDALRRRLAAADGAEHQMDLLRHAHQAEVFRILLLDLAGRLSVEHVSDRLSELADAMLDVTIEVVWSQLAKRHRDTPCFAAIAYGKLGGKELGYASDLDLIFLYDDPDERAADVYTTFARRLITWLTTATGAGTLFDIDLRLRPNGEAGLLVTDLDAFRRYQLREGDAANTAWVWEHQALTRARYSAGDARIGAAFEAIRVQVLTTPRDAAVLAKEIVEMREKVLAGHPNTTERFDLKHDRGGMVDIEFAVQYWVLLHAARHPEMIRNTGNIALLREVSRFGLMSEEEAETVGAAYRTYRKLQHRLRLDGMEKARVEPERVAAERQAVAALWARVFGA</sequence>